<gene>
    <name type="primary">alr</name>
    <name type="ordered locus">H16_A2113</name>
</gene>
<keyword id="KW-0413">Isomerase</keyword>
<keyword id="KW-0663">Pyridoxal phosphate</keyword>
<keyword id="KW-1185">Reference proteome</keyword>
<protein>
    <recommendedName>
        <fullName evidence="1">Alanine racemase</fullName>
        <ecNumber evidence="1">5.1.1.1</ecNumber>
    </recommendedName>
</protein>
<sequence>MPRPIHAVIHQPALANNLDIIRGKAPESRIWAVVKANAYGHGIRRVFAALRGADGFGLLDLNEAVLLRDLGWQGPILLLEGFFQPQDVAVIEQYRLTTAIHCDEQLRMLESARAKGPLAIQLKLNTGMNRLGFHPAAYRTAWERARAMPCVGSIVHMTHFSDADSARGVAHQIEAFDAATANLPGEASLSNSAAVLWHPQAHRAWVRPGIILYGASPTGRDADIAGTGLQPAMSLHSELISVQDLQPGDTVGYGSLFTAERPMRIGVVACGYADGYPRHASGWGEQRAPVLVDGVRTELVGRVSMDMLCVDLTPCPKARVGSPVTLWGQGLPIDEVAQASGTVGYELMCALAPRVPTSVATITASDSAAPAVA</sequence>
<name>ALR_CUPNH</name>
<dbReference type="EC" id="5.1.1.1" evidence="1"/>
<dbReference type="EMBL" id="AM260479">
    <property type="protein sequence ID" value="CAJ93212.1"/>
    <property type="molecule type" value="Genomic_DNA"/>
</dbReference>
<dbReference type="RefSeq" id="WP_010810632.1">
    <property type="nucleotide sequence ID" value="NZ_CP039287.1"/>
</dbReference>
<dbReference type="SMR" id="Q0K9V9"/>
<dbReference type="STRING" id="381666.H16_A2113"/>
<dbReference type="KEGG" id="reh:H16_A2113"/>
<dbReference type="eggNOG" id="COG0787">
    <property type="taxonomic scope" value="Bacteria"/>
</dbReference>
<dbReference type="HOGENOM" id="CLU_028393_1_0_4"/>
<dbReference type="OrthoDB" id="9813814at2"/>
<dbReference type="UniPathway" id="UPA00042">
    <property type="reaction ID" value="UER00497"/>
</dbReference>
<dbReference type="Proteomes" id="UP000008210">
    <property type="component" value="Chromosome 1"/>
</dbReference>
<dbReference type="GO" id="GO:0005829">
    <property type="term" value="C:cytosol"/>
    <property type="evidence" value="ECO:0007669"/>
    <property type="project" value="TreeGrafter"/>
</dbReference>
<dbReference type="GO" id="GO:0008784">
    <property type="term" value="F:alanine racemase activity"/>
    <property type="evidence" value="ECO:0007669"/>
    <property type="project" value="UniProtKB-UniRule"/>
</dbReference>
<dbReference type="GO" id="GO:0030170">
    <property type="term" value="F:pyridoxal phosphate binding"/>
    <property type="evidence" value="ECO:0007669"/>
    <property type="project" value="UniProtKB-UniRule"/>
</dbReference>
<dbReference type="GO" id="GO:0030632">
    <property type="term" value="P:D-alanine biosynthetic process"/>
    <property type="evidence" value="ECO:0007669"/>
    <property type="project" value="UniProtKB-UniRule"/>
</dbReference>
<dbReference type="CDD" id="cd06827">
    <property type="entry name" value="PLPDE_III_AR_proteobact"/>
    <property type="match status" value="1"/>
</dbReference>
<dbReference type="FunFam" id="3.20.20.10:FF:000002">
    <property type="entry name" value="Alanine racemase"/>
    <property type="match status" value="1"/>
</dbReference>
<dbReference type="Gene3D" id="3.20.20.10">
    <property type="entry name" value="Alanine racemase"/>
    <property type="match status" value="1"/>
</dbReference>
<dbReference type="Gene3D" id="2.40.37.10">
    <property type="entry name" value="Lyase, Ornithine Decarboxylase, Chain A, domain 1"/>
    <property type="match status" value="1"/>
</dbReference>
<dbReference type="HAMAP" id="MF_01201">
    <property type="entry name" value="Ala_racemase"/>
    <property type="match status" value="1"/>
</dbReference>
<dbReference type="InterPro" id="IPR000821">
    <property type="entry name" value="Ala_racemase"/>
</dbReference>
<dbReference type="InterPro" id="IPR009006">
    <property type="entry name" value="Ala_racemase/Decarboxylase_C"/>
</dbReference>
<dbReference type="InterPro" id="IPR011079">
    <property type="entry name" value="Ala_racemase_C"/>
</dbReference>
<dbReference type="InterPro" id="IPR001608">
    <property type="entry name" value="Ala_racemase_N"/>
</dbReference>
<dbReference type="InterPro" id="IPR020622">
    <property type="entry name" value="Ala_racemase_pyridoxalP-BS"/>
</dbReference>
<dbReference type="InterPro" id="IPR029066">
    <property type="entry name" value="PLP-binding_barrel"/>
</dbReference>
<dbReference type="NCBIfam" id="TIGR00492">
    <property type="entry name" value="alr"/>
    <property type="match status" value="1"/>
</dbReference>
<dbReference type="PANTHER" id="PTHR30511">
    <property type="entry name" value="ALANINE RACEMASE"/>
    <property type="match status" value="1"/>
</dbReference>
<dbReference type="PANTHER" id="PTHR30511:SF0">
    <property type="entry name" value="ALANINE RACEMASE, CATABOLIC-RELATED"/>
    <property type="match status" value="1"/>
</dbReference>
<dbReference type="Pfam" id="PF00842">
    <property type="entry name" value="Ala_racemase_C"/>
    <property type="match status" value="1"/>
</dbReference>
<dbReference type="Pfam" id="PF01168">
    <property type="entry name" value="Ala_racemase_N"/>
    <property type="match status" value="1"/>
</dbReference>
<dbReference type="PRINTS" id="PR00992">
    <property type="entry name" value="ALARACEMASE"/>
</dbReference>
<dbReference type="SMART" id="SM01005">
    <property type="entry name" value="Ala_racemase_C"/>
    <property type="match status" value="1"/>
</dbReference>
<dbReference type="SUPFAM" id="SSF50621">
    <property type="entry name" value="Alanine racemase C-terminal domain-like"/>
    <property type="match status" value="1"/>
</dbReference>
<dbReference type="SUPFAM" id="SSF51419">
    <property type="entry name" value="PLP-binding barrel"/>
    <property type="match status" value="1"/>
</dbReference>
<dbReference type="PROSITE" id="PS00395">
    <property type="entry name" value="ALANINE_RACEMASE"/>
    <property type="match status" value="1"/>
</dbReference>
<comment type="function">
    <text evidence="1">Catalyzes the interconversion of L-alanine and D-alanine. May also act on other amino acids.</text>
</comment>
<comment type="catalytic activity">
    <reaction evidence="1">
        <text>L-alanine = D-alanine</text>
        <dbReference type="Rhea" id="RHEA:20249"/>
        <dbReference type="ChEBI" id="CHEBI:57416"/>
        <dbReference type="ChEBI" id="CHEBI:57972"/>
        <dbReference type="EC" id="5.1.1.1"/>
    </reaction>
</comment>
<comment type="cofactor">
    <cofactor evidence="1">
        <name>pyridoxal 5'-phosphate</name>
        <dbReference type="ChEBI" id="CHEBI:597326"/>
    </cofactor>
</comment>
<comment type="pathway">
    <text evidence="1">Amino-acid biosynthesis; D-alanine biosynthesis; D-alanine from L-alanine: step 1/1.</text>
</comment>
<comment type="similarity">
    <text evidence="1">Belongs to the alanine racemase family.</text>
</comment>
<proteinExistence type="inferred from homology"/>
<accession>Q0K9V9</accession>
<feature type="chain" id="PRO_1000066031" description="Alanine racemase">
    <location>
        <begin position="1"/>
        <end position="373"/>
    </location>
</feature>
<feature type="active site" description="Proton acceptor; specific for D-alanine" evidence="1">
    <location>
        <position position="35"/>
    </location>
</feature>
<feature type="active site" description="Proton acceptor; specific for L-alanine" evidence="1">
    <location>
        <position position="253"/>
    </location>
</feature>
<feature type="binding site" evidence="1">
    <location>
        <position position="130"/>
    </location>
    <ligand>
        <name>substrate</name>
    </ligand>
</feature>
<feature type="binding site" evidence="1">
    <location>
        <position position="305"/>
    </location>
    <ligand>
        <name>substrate</name>
    </ligand>
</feature>
<feature type="modified residue" description="N6-(pyridoxal phosphate)lysine" evidence="1">
    <location>
        <position position="35"/>
    </location>
</feature>
<evidence type="ECO:0000255" key="1">
    <source>
        <dbReference type="HAMAP-Rule" id="MF_01201"/>
    </source>
</evidence>
<reference key="1">
    <citation type="journal article" date="2006" name="Nat. Biotechnol.">
        <title>Genome sequence of the bioplastic-producing 'Knallgas' bacterium Ralstonia eutropha H16.</title>
        <authorList>
            <person name="Pohlmann A."/>
            <person name="Fricke W.F."/>
            <person name="Reinecke F."/>
            <person name="Kusian B."/>
            <person name="Liesegang H."/>
            <person name="Cramm R."/>
            <person name="Eitinger T."/>
            <person name="Ewering C."/>
            <person name="Poetter M."/>
            <person name="Schwartz E."/>
            <person name="Strittmatter A."/>
            <person name="Voss I."/>
            <person name="Gottschalk G."/>
            <person name="Steinbuechel A."/>
            <person name="Friedrich B."/>
            <person name="Bowien B."/>
        </authorList>
    </citation>
    <scope>NUCLEOTIDE SEQUENCE [LARGE SCALE GENOMIC DNA]</scope>
    <source>
        <strain>ATCC 17699 / DSM 428 / KCTC 22496 / NCIMB 10442 / H16 / Stanier 337</strain>
    </source>
</reference>
<organism>
    <name type="scientific">Cupriavidus necator (strain ATCC 17699 / DSM 428 / KCTC 22496 / NCIMB 10442 / H16 / Stanier 337)</name>
    <name type="common">Ralstonia eutropha</name>
    <dbReference type="NCBI Taxonomy" id="381666"/>
    <lineage>
        <taxon>Bacteria</taxon>
        <taxon>Pseudomonadati</taxon>
        <taxon>Pseudomonadota</taxon>
        <taxon>Betaproteobacteria</taxon>
        <taxon>Burkholderiales</taxon>
        <taxon>Burkholderiaceae</taxon>
        <taxon>Cupriavidus</taxon>
    </lineage>
</organism>